<name>HYAL3_RAT</name>
<evidence type="ECO:0000250" key="1">
    <source>
        <dbReference type="UniProtKB" id="Q12794"/>
    </source>
</evidence>
<evidence type="ECO:0000250" key="2">
    <source>
        <dbReference type="UniProtKB" id="Q8VEI3"/>
    </source>
</evidence>
<evidence type="ECO:0000255" key="3"/>
<evidence type="ECO:0000305" key="4"/>
<proteinExistence type="evidence at transcript level"/>
<gene>
    <name type="primary">Hyal3</name>
</gene>
<reference key="1">
    <citation type="submission" date="2003-01" db="EMBL/GenBank/DDBJ databases">
        <title>Expression and activity of rat hyaluronidase.</title>
        <authorList>
            <person name="Hanaki A."/>
            <person name="Ueno Y."/>
            <person name="Nakasa T."/>
            <person name="Okinaka O."/>
        </authorList>
    </citation>
    <scope>NUCLEOTIDE SEQUENCE [MRNA]</scope>
    <source>
        <strain>Wistar</strain>
    </source>
</reference>
<reference key="2">
    <citation type="journal article" date="2004" name="Genome Res.">
        <title>The status, quality, and expansion of the NIH full-length cDNA project: the Mammalian Gene Collection (MGC).</title>
        <authorList>
            <consortium name="The MGC Project Team"/>
        </authorList>
    </citation>
    <scope>NUCLEOTIDE SEQUENCE [LARGE SCALE MRNA]</scope>
    <source>
        <tissue>Testis</tissue>
    </source>
</reference>
<dbReference type="EC" id="3.2.1.35"/>
<dbReference type="EMBL" id="AB100602">
    <property type="protein sequence ID" value="BAD14370.1"/>
    <property type="molecule type" value="mRNA"/>
</dbReference>
<dbReference type="EMBL" id="BC097259">
    <property type="protein sequence ID" value="AAH97259.1"/>
    <property type="molecule type" value="mRNA"/>
</dbReference>
<dbReference type="RefSeq" id="NP_997482.2">
    <property type="nucleotide sequence ID" value="NM_207599.2"/>
</dbReference>
<dbReference type="SMR" id="Q76HM9"/>
<dbReference type="FunCoup" id="Q76HM9">
    <property type="interactions" value="117"/>
</dbReference>
<dbReference type="STRING" id="10116.ENSRNOP00000021590"/>
<dbReference type="CAZy" id="GH56">
    <property type="family name" value="Glycoside Hydrolase Family 56"/>
</dbReference>
<dbReference type="GlyCosmos" id="Q76HM9">
    <property type="glycosylation" value="2 sites, No reported glycans"/>
</dbReference>
<dbReference type="GlyGen" id="Q76HM9">
    <property type="glycosylation" value="2 sites"/>
</dbReference>
<dbReference type="PaxDb" id="10116-ENSRNOP00000021590"/>
<dbReference type="GeneID" id="300993"/>
<dbReference type="KEGG" id="rno:300993"/>
<dbReference type="AGR" id="RGD:1303334"/>
<dbReference type="CTD" id="8372"/>
<dbReference type="RGD" id="1303334">
    <property type="gene designation" value="Hyal3"/>
</dbReference>
<dbReference type="eggNOG" id="ENOG502QTXP">
    <property type="taxonomic scope" value="Eukaryota"/>
</dbReference>
<dbReference type="InParanoid" id="Q76HM9"/>
<dbReference type="OrthoDB" id="23325at9989"/>
<dbReference type="PhylomeDB" id="Q76HM9"/>
<dbReference type="TreeFam" id="TF321598"/>
<dbReference type="BRENDA" id="3.2.1.35">
    <property type="organism ID" value="5301"/>
</dbReference>
<dbReference type="Reactome" id="R-RNO-2024101">
    <property type="pathway name" value="CS/DS degradation"/>
</dbReference>
<dbReference type="Reactome" id="R-RNO-2160916">
    <property type="pathway name" value="Hyaluronan uptake and degradation"/>
</dbReference>
<dbReference type="PRO" id="PR:Q76HM9"/>
<dbReference type="Proteomes" id="UP000002494">
    <property type="component" value="Unplaced"/>
</dbReference>
<dbReference type="GO" id="GO:0002080">
    <property type="term" value="C:acrosomal membrane"/>
    <property type="evidence" value="ECO:0000250"/>
    <property type="project" value="UniProtKB"/>
</dbReference>
<dbReference type="GO" id="GO:0001669">
    <property type="term" value="C:acrosomal vesicle"/>
    <property type="evidence" value="ECO:0000250"/>
    <property type="project" value="UniProtKB"/>
</dbReference>
<dbReference type="GO" id="GO:0031410">
    <property type="term" value="C:cytoplasmic vesicle"/>
    <property type="evidence" value="ECO:0000250"/>
    <property type="project" value="UniProtKB"/>
</dbReference>
<dbReference type="GO" id="GO:0005769">
    <property type="term" value="C:early endosome"/>
    <property type="evidence" value="ECO:0000250"/>
    <property type="project" value="UniProtKB"/>
</dbReference>
<dbReference type="GO" id="GO:0005783">
    <property type="term" value="C:endoplasmic reticulum"/>
    <property type="evidence" value="ECO:0000250"/>
    <property type="project" value="UniProtKB"/>
</dbReference>
<dbReference type="GO" id="GO:0005576">
    <property type="term" value="C:extracellular region"/>
    <property type="evidence" value="ECO:0007669"/>
    <property type="project" value="UniProtKB-SubCell"/>
</dbReference>
<dbReference type="GO" id="GO:0005764">
    <property type="term" value="C:lysosome"/>
    <property type="evidence" value="ECO:0000266"/>
    <property type="project" value="RGD"/>
</dbReference>
<dbReference type="GO" id="GO:0005886">
    <property type="term" value="C:plasma membrane"/>
    <property type="evidence" value="ECO:0007669"/>
    <property type="project" value="UniProtKB-SubCell"/>
</dbReference>
<dbReference type="GO" id="GO:0097225">
    <property type="term" value="C:sperm midpiece"/>
    <property type="evidence" value="ECO:0000250"/>
    <property type="project" value="UniProtKB"/>
</dbReference>
<dbReference type="GO" id="GO:0033906">
    <property type="term" value="F:hyaluronoglucuronidase activity"/>
    <property type="evidence" value="ECO:0000266"/>
    <property type="project" value="RGD"/>
</dbReference>
<dbReference type="GO" id="GO:0004415">
    <property type="term" value="F:hyalurononglucosaminidase activity"/>
    <property type="evidence" value="ECO:0000250"/>
    <property type="project" value="UniProtKB"/>
</dbReference>
<dbReference type="GO" id="GO:0005975">
    <property type="term" value="P:carbohydrate metabolic process"/>
    <property type="evidence" value="ECO:0007669"/>
    <property type="project" value="InterPro"/>
</dbReference>
<dbReference type="GO" id="GO:0051216">
    <property type="term" value="P:cartilage development"/>
    <property type="evidence" value="ECO:0000266"/>
    <property type="project" value="RGD"/>
</dbReference>
<dbReference type="GO" id="GO:0071347">
    <property type="term" value="P:cellular response to interleukin-1"/>
    <property type="evidence" value="ECO:0000266"/>
    <property type="project" value="RGD"/>
</dbReference>
<dbReference type="GO" id="GO:0071356">
    <property type="term" value="P:cellular response to tumor necrosis factor"/>
    <property type="evidence" value="ECO:0000266"/>
    <property type="project" value="RGD"/>
</dbReference>
<dbReference type="GO" id="GO:0071493">
    <property type="term" value="P:cellular response to UV-B"/>
    <property type="evidence" value="ECO:0000266"/>
    <property type="project" value="RGD"/>
</dbReference>
<dbReference type="GO" id="GO:0030214">
    <property type="term" value="P:hyaluronan catabolic process"/>
    <property type="evidence" value="ECO:0000250"/>
    <property type="project" value="UniProtKB"/>
</dbReference>
<dbReference type="GO" id="GO:0006954">
    <property type="term" value="P:inflammatory response"/>
    <property type="evidence" value="ECO:0000266"/>
    <property type="project" value="RGD"/>
</dbReference>
<dbReference type="GO" id="GO:2000355">
    <property type="term" value="P:negative regulation of ovarian follicle development"/>
    <property type="evidence" value="ECO:0000250"/>
    <property type="project" value="UniProtKB"/>
</dbReference>
<dbReference type="GO" id="GO:0001552">
    <property type="term" value="P:ovarian follicle atresia"/>
    <property type="evidence" value="ECO:0000250"/>
    <property type="project" value="UniProtKB"/>
</dbReference>
<dbReference type="GO" id="GO:0007341">
    <property type="term" value="P:penetration of zona pellucida"/>
    <property type="evidence" value="ECO:0000250"/>
    <property type="project" value="UniProtKB"/>
</dbReference>
<dbReference type="GO" id="GO:2000368">
    <property type="term" value="P:positive regulation of acrosomal vesicle exocytosis"/>
    <property type="evidence" value="ECO:0000250"/>
    <property type="project" value="UniProtKB"/>
</dbReference>
<dbReference type="GO" id="GO:0046677">
    <property type="term" value="P:response to antibiotic"/>
    <property type="evidence" value="ECO:0000266"/>
    <property type="project" value="RGD"/>
</dbReference>
<dbReference type="GO" id="GO:0009615">
    <property type="term" value="P:response to virus"/>
    <property type="evidence" value="ECO:0000266"/>
    <property type="project" value="RGD"/>
</dbReference>
<dbReference type="FunFam" id="3.20.20.70:FF:000065">
    <property type="entry name" value="Hyaluronidase"/>
    <property type="match status" value="1"/>
</dbReference>
<dbReference type="Gene3D" id="3.20.20.70">
    <property type="entry name" value="Aldolase class I"/>
    <property type="match status" value="1"/>
</dbReference>
<dbReference type="InterPro" id="IPR013785">
    <property type="entry name" value="Aldolase_TIM"/>
</dbReference>
<dbReference type="InterPro" id="IPR000742">
    <property type="entry name" value="EGF-like_dom"/>
</dbReference>
<dbReference type="InterPro" id="IPR017853">
    <property type="entry name" value="Glycoside_hydrolase_SF"/>
</dbReference>
<dbReference type="InterPro" id="IPR018155">
    <property type="entry name" value="Hyaluronidase"/>
</dbReference>
<dbReference type="InterPro" id="IPR027260">
    <property type="entry name" value="Hyaluronidase-3"/>
</dbReference>
<dbReference type="PANTHER" id="PTHR11769">
    <property type="entry name" value="HYALURONIDASE"/>
    <property type="match status" value="1"/>
</dbReference>
<dbReference type="PANTHER" id="PTHR11769:SF19">
    <property type="entry name" value="HYALURONIDASE-3"/>
    <property type="match status" value="1"/>
</dbReference>
<dbReference type="Pfam" id="PF01630">
    <property type="entry name" value="Glyco_hydro_56"/>
    <property type="match status" value="1"/>
</dbReference>
<dbReference type="PIRSF" id="PIRSF038193">
    <property type="entry name" value="Hyaluronidase"/>
    <property type="match status" value="1"/>
</dbReference>
<dbReference type="PIRSF" id="PIRSF500776">
    <property type="entry name" value="Hyaluronidase_3"/>
    <property type="match status" value="1"/>
</dbReference>
<dbReference type="PRINTS" id="PR00846">
    <property type="entry name" value="GLHYDRLASE56"/>
</dbReference>
<dbReference type="SUPFAM" id="SSF51445">
    <property type="entry name" value="(Trans)glycosidases"/>
    <property type="match status" value="1"/>
</dbReference>
<dbReference type="PROSITE" id="PS00022">
    <property type="entry name" value="EGF_1"/>
    <property type="match status" value="1"/>
</dbReference>
<dbReference type="PROSITE" id="PS01186">
    <property type="entry name" value="EGF_2"/>
    <property type="match status" value="1"/>
</dbReference>
<sequence length="412" mass="46207">MITQLGLTLVVGLTLCLVHVQALLQVPEFPFSVLWNVPSARCKTRFGVHLPLDALGIIANHGQRFHGQNITIFYKNQFGLYPYFGPRGTAHNGGIPQAVSLDHHLAQAAHQILHNLGSSFAGLAVLDWEEWYPLWAGNWGTHRQVYQAASWAWAQQMFPDLNPQEQLHKAQTGFEQAARALMEHTLRLGQMLRPHGLWGFYRYPVCGNGWHNMASNYTGHCHPAIITRNTQLRWLWAASSALFPSIYLPPRLPPAYHQTFVRHRLEEAFRVALTGHAHPLPVLAYVRLTHRSSGRFLSLDDLMQTIGVSAALGAAGVVLWGDLSVSSSEEECWRLHDYLVGTLGPYVINVTKAATACSHQRCHGHGRCSWKDPGQMEAFLHLQPDDNLGAWKSFRCRCYLGWSGPTCLEPKP</sequence>
<accession>Q76HM9</accession>
<accession>Q4V8Q0</accession>
<organism>
    <name type="scientific">Rattus norvegicus</name>
    <name type="common">Rat</name>
    <dbReference type="NCBI Taxonomy" id="10116"/>
    <lineage>
        <taxon>Eukaryota</taxon>
        <taxon>Metazoa</taxon>
        <taxon>Chordata</taxon>
        <taxon>Craniata</taxon>
        <taxon>Vertebrata</taxon>
        <taxon>Euteleostomi</taxon>
        <taxon>Mammalia</taxon>
        <taxon>Eutheria</taxon>
        <taxon>Euarchontoglires</taxon>
        <taxon>Glires</taxon>
        <taxon>Rodentia</taxon>
        <taxon>Myomorpha</taxon>
        <taxon>Muroidea</taxon>
        <taxon>Muridae</taxon>
        <taxon>Murinae</taxon>
        <taxon>Rattus</taxon>
    </lineage>
</organism>
<feature type="signal peptide" evidence="3">
    <location>
        <begin position="1"/>
        <end position="22"/>
    </location>
</feature>
<feature type="chain" id="PRO_0000248204" description="Hyaluronidase-3">
    <location>
        <begin position="23"/>
        <end position="412"/>
    </location>
</feature>
<feature type="domain" description="EGF-like">
    <location>
        <begin position="353"/>
        <end position="408"/>
    </location>
</feature>
<feature type="active site" description="Proton donor" evidence="1">
    <location>
        <position position="129"/>
    </location>
</feature>
<feature type="glycosylation site" description="N-linked (GlcNAc...) asparagine" evidence="3">
    <location>
        <position position="69"/>
    </location>
</feature>
<feature type="glycosylation site" description="N-linked (GlcNAc...) asparagine" evidence="3">
    <location>
        <position position="216"/>
    </location>
</feature>
<feature type="disulfide bond" evidence="1">
    <location>
        <begin position="42"/>
        <end position="332"/>
    </location>
</feature>
<feature type="disulfide bond" evidence="1">
    <location>
        <begin position="206"/>
        <end position="221"/>
    </location>
</feature>
<feature type="disulfide bond" evidence="1">
    <location>
        <begin position="357"/>
        <end position="368"/>
    </location>
</feature>
<feature type="disulfide bond" evidence="1">
    <location>
        <begin position="362"/>
        <end position="396"/>
    </location>
</feature>
<feature type="disulfide bond" evidence="1">
    <location>
        <begin position="398"/>
        <end position="407"/>
    </location>
</feature>
<feature type="sequence conflict" description="In Ref. 2; AAH97259." evidence="4" ref="2">
    <original>F</original>
    <variation>L</variation>
    <location>
        <position position="29"/>
    </location>
</feature>
<comment type="function">
    <text evidence="2">Facilitates sperm penetration into the layer of cumulus cells surrounding the egg by digesting hyaluronic acid. Involved in induction of the acrosome reaction in the sperm. Involved in follicular atresia, the breakdown of immature ovarian follicles that are not selected to ovulate. Induces ovarian granulosa cell apoptosis, possibly via apoptotic signaling pathway involving CASP8 and CASP3 activation, and poly(ADP-ribose) polymerase (PARP) cleavage. Has no hyaluronidase activity in embryonic fibroblasts in vitro. Has no hyaluronidase activity in granulosa cells in vitro.</text>
</comment>
<comment type="catalytic activity">
    <reaction evidence="2">
        <text>Random hydrolysis of (1-&gt;4)-linkages between N-acetyl-beta-D-glucosamine and D-glucuronate residues in hyaluronate.</text>
        <dbReference type="EC" id="3.2.1.35"/>
    </reaction>
</comment>
<comment type="subcellular location">
    <subcellularLocation>
        <location evidence="2">Secreted</location>
    </subcellularLocation>
    <subcellularLocation>
        <location evidence="2">Cell membrane</location>
    </subcellularLocation>
    <subcellularLocation>
        <location evidence="2">Cytoplasmic vesicle</location>
        <location evidence="2">Secretory vesicle</location>
        <location evidence="2">Acrosome</location>
    </subcellularLocation>
    <subcellularLocation>
        <location evidence="2">Endoplasmic reticulum</location>
    </subcellularLocation>
    <subcellularLocation>
        <location evidence="2">Early endosome</location>
    </subcellularLocation>
    <text evidence="2">Mostly present in low-density vesicles. Low levels in higher density vesicles of late endosomes and lysosomes. Localized in punctate cytoplasmic vesicles and in perinuclear structures, but does not colocalize with LAMP1. Localized on the plasma membrane over the acrosome and on the surface of the midpiece of the sperm tail.</text>
</comment>
<comment type="PTM">
    <text evidence="2">N-glycosylated.</text>
</comment>
<comment type="similarity">
    <text evidence="4">Belongs to the glycosyl hydrolase 56 family.</text>
</comment>
<keyword id="KW-1003">Cell membrane</keyword>
<keyword id="KW-0968">Cytoplasmic vesicle</keyword>
<keyword id="KW-1015">Disulfide bond</keyword>
<keyword id="KW-0245">EGF-like domain</keyword>
<keyword id="KW-0256">Endoplasmic reticulum</keyword>
<keyword id="KW-0967">Endosome</keyword>
<keyword id="KW-0278">Fertilization</keyword>
<keyword id="KW-0325">Glycoprotein</keyword>
<keyword id="KW-0326">Glycosidase</keyword>
<keyword id="KW-0378">Hydrolase</keyword>
<keyword id="KW-0472">Membrane</keyword>
<keyword id="KW-1185">Reference proteome</keyword>
<keyword id="KW-0964">Secreted</keyword>
<keyword id="KW-0732">Signal</keyword>
<protein>
    <recommendedName>
        <fullName>Hyaluronidase-3</fullName>
        <shortName>Hyal-3</shortName>
        <ecNumber>3.2.1.35</ecNumber>
    </recommendedName>
    <alternativeName>
        <fullName>Hyaluronoglucosaminidase-3</fullName>
    </alternativeName>
</protein>